<accession>Q31HC4</accession>
<gene>
    <name evidence="1" type="primary">dabB</name>
    <name evidence="5" type="ordered locus">Tcr_0853</name>
</gene>
<feature type="chain" id="PRO_0000453158" description="Probable inorganic carbon transporter subunit DabB">
    <location>
        <begin position="1"/>
        <end position="518"/>
    </location>
</feature>
<feature type="transmembrane region" description="Helical" evidence="1">
    <location>
        <begin position="3"/>
        <end position="23"/>
    </location>
</feature>
<feature type="transmembrane region" description="Helical" evidence="1">
    <location>
        <begin position="37"/>
        <end position="57"/>
    </location>
</feature>
<feature type="transmembrane region" description="Helical" evidence="1">
    <location>
        <begin position="65"/>
        <end position="85"/>
    </location>
</feature>
<feature type="transmembrane region" description="Helical" evidence="1">
    <location>
        <begin position="114"/>
        <end position="134"/>
    </location>
</feature>
<feature type="transmembrane region" description="Helical" evidence="1">
    <location>
        <begin position="165"/>
        <end position="185"/>
    </location>
</feature>
<feature type="transmembrane region" description="Helical" evidence="1">
    <location>
        <begin position="207"/>
        <end position="227"/>
    </location>
</feature>
<feature type="transmembrane region" description="Helical" evidence="1">
    <location>
        <begin position="242"/>
        <end position="262"/>
    </location>
</feature>
<feature type="transmembrane region" description="Helical" evidence="1">
    <location>
        <begin position="264"/>
        <end position="284"/>
    </location>
</feature>
<feature type="transmembrane region" description="Helical" evidence="1">
    <location>
        <begin position="302"/>
        <end position="322"/>
    </location>
</feature>
<feature type="transmembrane region" description="Helical" evidence="1">
    <location>
        <begin position="358"/>
        <end position="378"/>
    </location>
</feature>
<feature type="transmembrane region" description="Helical" evidence="1">
    <location>
        <begin position="379"/>
        <end position="399"/>
    </location>
</feature>
<feature type="transmembrane region" description="Helical" evidence="1">
    <location>
        <begin position="403"/>
        <end position="423"/>
    </location>
</feature>
<feature type="transmembrane region" description="Helical" evidence="1">
    <location>
        <begin position="442"/>
        <end position="462"/>
    </location>
</feature>
<reference key="1">
    <citation type="journal article" date="2006" name="PLoS Biol.">
        <title>The genome of deep-sea vent chemolithoautotroph Thiomicrospira crunogena XCL-2.</title>
        <authorList>
            <person name="Scott K.M."/>
            <person name="Sievert S.M."/>
            <person name="Abril F.N."/>
            <person name="Ball L.A."/>
            <person name="Barrett C.J."/>
            <person name="Blake R.A."/>
            <person name="Boller A.J."/>
            <person name="Chain P.S.G."/>
            <person name="Clark J.A."/>
            <person name="Davis C.R."/>
            <person name="Detter C."/>
            <person name="Do K.F."/>
            <person name="Dobrinski K.P."/>
            <person name="Faza B.I."/>
            <person name="Fitzpatrick K.A."/>
            <person name="Freyermuth S.K."/>
            <person name="Harmer T.L."/>
            <person name="Hauser L.J."/>
            <person name="Huegler M."/>
            <person name="Kerfeld C.A."/>
            <person name="Klotz M.G."/>
            <person name="Kong W.W."/>
            <person name="Land M."/>
            <person name="Lapidus A."/>
            <person name="Larimer F.W."/>
            <person name="Longo D.L."/>
            <person name="Lucas S."/>
            <person name="Malfatti S.A."/>
            <person name="Massey S.E."/>
            <person name="Martin D.D."/>
            <person name="McCuddin Z."/>
            <person name="Meyer F."/>
            <person name="Moore J.L."/>
            <person name="Ocampo L.H. Jr."/>
            <person name="Paul J.H."/>
            <person name="Paulsen I.T."/>
            <person name="Reep D.K."/>
            <person name="Ren Q."/>
            <person name="Ross R.L."/>
            <person name="Sato P.Y."/>
            <person name="Thomas P."/>
            <person name="Tinkham L.E."/>
            <person name="Zeruth G.T."/>
        </authorList>
    </citation>
    <scope>NUCLEOTIDE SEQUENCE [LARGE SCALE GENOMIC DNA]</scope>
    <source>
        <strain>DSM 25203 / XCL-2</strain>
    </source>
</reference>
<reference key="2">
    <citation type="journal article" date="2016" name="Arch. Microbiol.">
        <title>Dissolved inorganic carbon uptake in Thiomicrospira crunogena XCL-2 is Deltap- and ATP-sensitive and enhances RubisCO-mediated carbon fixation.</title>
        <authorList>
            <consortium name="USF MCB4404L 2012"/>
            <person name="Menning K.J."/>
            <person name="Menon B.B."/>
            <person name="Fox G."/>
            <person name="Scott K.M."/>
        </authorList>
    </citation>
    <scope>ACTIVITY REGULATION</scope>
    <source>
        <strain>DSM 25203 / XCL-2</strain>
    </source>
</reference>
<reference key="3">
    <citation type="journal article" date="2017" name="J. Bacteriol.">
        <title>Proteomic and Mutant Analysis of the CO2 Concentrating Mechanism of Hydrothermal Vent Chemolithoautotroph Thiomicrospira crunogena.</title>
        <authorList>
            <consortium name="USF MCB4404L"/>
            <person name="Mangiapia M."/>
            <person name="Brown T.W."/>
            <person name="Chaput D."/>
            <person name="Haller E."/>
            <person name="Harmer T.L."/>
            <person name="Hashemy Z."/>
            <person name="Keeley R."/>
            <person name="Leonard J."/>
            <person name="Mancera P."/>
            <person name="Nicholson D."/>
            <person name="Stevens S."/>
            <person name="Wanjugi P."/>
            <person name="Zabinski T."/>
            <person name="Pan C."/>
            <person name="Scott K.M."/>
        </authorList>
    </citation>
    <scope>PROTEIN SEQUENCE OF 329-344; 495-503 AND 508-518</scope>
    <scope>SUBCELLULAR LOCATION</scope>
    <scope>INDUCTION</scope>
    <scope>DISRUPTION PHENOTYPE</scope>
    <source>
        <strain>DSM 25203 / XCL-2</strain>
    </source>
</reference>
<proteinExistence type="evidence at protein level"/>
<dbReference type="EMBL" id="CP000109">
    <property type="protein sequence ID" value="ABB41449.1"/>
    <property type="molecule type" value="Genomic_DNA"/>
</dbReference>
<dbReference type="SMR" id="Q31HC4"/>
<dbReference type="STRING" id="317025.Tcr_0853"/>
<dbReference type="TCDB" id="9.A.2.1.1">
    <property type="family name" value="the putative dissolved inorganic carbon concentrating transporter (dic-ct) family"/>
</dbReference>
<dbReference type="KEGG" id="tcx:Tcr_0853"/>
<dbReference type="eggNOG" id="COG1009">
    <property type="taxonomic scope" value="Bacteria"/>
</dbReference>
<dbReference type="HOGENOM" id="CLU_007100_11_1_6"/>
<dbReference type="GO" id="GO:0005886">
    <property type="term" value="C:plasma membrane"/>
    <property type="evidence" value="ECO:0007669"/>
    <property type="project" value="UniProtKB-SubCell"/>
</dbReference>
<dbReference type="GO" id="GO:0008137">
    <property type="term" value="F:NADH dehydrogenase (ubiquinone) activity"/>
    <property type="evidence" value="ECO:0007669"/>
    <property type="project" value="InterPro"/>
</dbReference>
<dbReference type="GO" id="GO:0042773">
    <property type="term" value="P:ATP synthesis coupled electron transport"/>
    <property type="evidence" value="ECO:0007669"/>
    <property type="project" value="InterPro"/>
</dbReference>
<dbReference type="GO" id="GO:0015990">
    <property type="term" value="P:electron transport coupled proton transport"/>
    <property type="evidence" value="ECO:0007669"/>
    <property type="project" value="TreeGrafter"/>
</dbReference>
<dbReference type="HAMAP" id="MF_00862">
    <property type="entry name" value="DabB"/>
    <property type="match status" value="1"/>
</dbReference>
<dbReference type="InterPro" id="IPR001750">
    <property type="entry name" value="ND/Mrp_TM"/>
</dbReference>
<dbReference type="InterPro" id="IPR003945">
    <property type="entry name" value="NU5C-like"/>
</dbReference>
<dbReference type="InterPro" id="IPR046396">
    <property type="entry name" value="Transporter_DabB"/>
</dbReference>
<dbReference type="NCBIfam" id="NF006029">
    <property type="entry name" value="PRK08168.1"/>
    <property type="match status" value="1"/>
</dbReference>
<dbReference type="PANTHER" id="PTHR42829:SF1">
    <property type="entry name" value="INORGANIC CARBON TRANSPORTER SUBUNIT DABB-RELATED"/>
    <property type="match status" value="1"/>
</dbReference>
<dbReference type="PANTHER" id="PTHR42829">
    <property type="entry name" value="NADH-UBIQUINONE OXIDOREDUCTASE CHAIN 5"/>
    <property type="match status" value="1"/>
</dbReference>
<dbReference type="Pfam" id="PF00361">
    <property type="entry name" value="Proton_antipo_M"/>
    <property type="match status" value="1"/>
</dbReference>
<dbReference type="PRINTS" id="PR01434">
    <property type="entry name" value="NADHDHGNASE5"/>
</dbReference>
<sequence length="518" mass="57971">MNMQWVGASMMLLIPVLFFLGSLTNERRANWNLASAISLLGLFLSMFLGIAVYFEWVNLSISGQWVGVSKMSLVMLGLVCFIAFVNVRYSSAYMAGNVDEEKRYLRWLMVTLGCVVTVIISNHMLVLMVAWIAISLSLHRLLVFFPNRQRAVLAAHKKFIFARVAEACLLGAILILYYEHGTWFISDIYQNVSLSTSLTTLDQFAAMLLALAALVKCAQLPLHGWLIQVVEAPTPVSALLHAGIINLGGYLLIIFAPLIVLSDMAQWILLIVGGITTVLAALVMMTRTSVKVRLAWSTMSQMGLMLVECALGLFELALLHLVAHSCYKAYAFLNAGSEVESSMKRRLSRAVAPSVKEWWFAGIMSAAMVVGLIWLADLSGPYSPWLLFAIAVTLLIAERRGRLTSSSVIGMVGLGVVLLVVYTLQKNGASLIVSSMETSVGWKGDLWIGFLLVMFMVGYFLLRYHSEHIWMRKVRRAFYAGFYLDEWVTRLNLRIYPTRLPVRFKPKKLQVPKEELFQ</sequence>
<evidence type="ECO:0000255" key="1">
    <source>
        <dbReference type="HAMAP-Rule" id="MF_00862"/>
    </source>
</evidence>
<evidence type="ECO:0000269" key="2">
    <source>
    </source>
</evidence>
<evidence type="ECO:0000269" key="3">
    <source>
    </source>
</evidence>
<evidence type="ECO:0000305" key="4">
    <source>
    </source>
</evidence>
<evidence type="ECO:0000312" key="5">
    <source>
        <dbReference type="EMBL" id="ABB41449.1"/>
    </source>
</evidence>
<name>DABB_HYDCU</name>
<comment type="function">
    <text evidence="4">Part of an energy-coupled inorganic carbon pump involved in transport of dissolved inorganic carbon (DIC) with downstream gene dabA (Tcr_0854); has been suggested to be a proton-DIC symporter.</text>
</comment>
<comment type="activity regulation">
    <text evidence="2">Intracellular DIC accumulation is sensitive to CCCP (carbonyl cyanide-m-chlorophenylhydrazone) and DCCD (N,N-dicyclohexylcarbodiimide) and therefore likely driven by either proton gradient, ATP, or both.</text>
</comment>
<comment type="subunit">
    <text evidence="1">Forms a complex with DabA.</text>
</comment>
<comment type="subcellular location">
    <subcellularLocation>
        <location evidence="1 4">Cell inner membrane</location>
        <topology evidence="1">Multi-pass membrane protein</topology>
    </subcellularLocation>
</comment>
<comment type="induction">
    <text evidence="3">Induced by growth in low levels of dissolved inorganic carbon (DIC) (at protein level).</text>
</comment>
<comment type="disruption phenotype">
    <text evidence="3">Cells do not grow in low DIC levels, increased carboxysome content. Decreased ability to accumulate and fix DIC under DIC-limiting conditions.</text>
</comment>
<comment type="similarity">
    <text evidence="1">Belongs to the inorganic carbon transporter (TC 9.A.2) DabB family.</text>
</comment>
<organism>
    <name type="scientific">Hydrogenovibrio crunogenus (strain DSM 25203 / XCL-2)</name>
    <name type="common">Thiomicrospira crunogena</name>
    <dbReference type="NCBI Taxonomy" id="317025"/>
    <lineage>
        <taxon>Bacteria</taxon>
        <taxon>Pseudomonadati</taxon>
        <taxon>Pseudomonadota</taxon>
        <taxon>Gammaproteobacteria</taxon>
        <taxon>Thiotrichales</taxon>
        <taxon>Piscirickettsiaceae</taxon>
        <taxon>Hydrogenovibrio</taxon>
    </lineage>
</organism>
<protein>
    <recommendedName>
        <fullName evidence="1 4">Probable inorganic carbon transporter subunit DabB</fullName>
        <shortName evidence="4">DIC transporter subunit DabB</shortName>
    </recommendedName>
</protein>
<keyword id="KW-0997">Cell inner membrane</keyword>
<keyword id="KW-1003">Cell membrane</keyword>
<keyword id="KW-0903">Direct protein sequencing</keyword>
<keyword id="KW-0472">Membrane</keyword>
<keyword id="KW-0812">Transmembrane</keyword>
<keyword id="KW-1133">Transmembrane helix</keyword>
<keyword id="KW-0813">Transport</keyword>